<organism>
    <name type="scientific">Salipaludibacillus agaradhaerens</name>
    <name type="common">Bacillus agaradhaerens</name>
    <dbReference type="NCBI Taxonomy" id="76935"/>
    <lineage>
        <taxon>Bacteria</taxon>
        <taxon>Bacillati</taxon>
        <taxon>Bacillota</taxon>
        <taxon>Bacilli</taxon>
        <taxon>Bacillales</taxon>
        <taxon>Bacillaceae</taxon>
    </lineage>
</organism>
<evidence type="ECO:0000250" key="1">
    <source>
        <dbReference type="UniProtKB" id="P22533"/>
    </source>
</evidence>
<evidence type="ECO:0000256" key="2">
    <source>
        <dbReference type="SAM" id="MobiDB-lite"/>
    </source>
</evidence>
<evidence type="ECO:0000269" key="3">
    <source>
    </source>
</evidence>
<evidence type="ECO:0000303" key="4">
    <source>
    </source>
</evidence>
<evidence type="ECO:0000305" key="5"/>
<evidence type="ECO:0007829" key="6">
    <source>
        <dbReference type="PDB" id="2WHJ"/>
    </source>
</evidence>
<feature type="chain" id="PRO_0000433976" description="Mannan endo-1,4-beta-mannosidase">
    <location>
        <begin position="1"/>
        <end position="308"/>
    </location>
</feature>
<feature type="region of interest" description="Disordered" evidence="2">
    <location>
        <begin position="284"/>
        <end position="308"/>
    </location>
</feature>
<feature type="compositionally biased region" description="Polar residues" evidence="2">
    <location>
        <begin position="287"/>
        <end position="297"/>
    </location>
</feature>
<feature type="active site" description="Proton donor" evidence="1">
    <location>
        <position position="125"/>
    </location>
</feature>
<feature type="active site" description="Nucleophile" evidence="1">
    <location>
        <position position="220"/>
    </location>
</feature>
<feature type="strand" evidence="6">
    <location>
        <begin position="4"/>
        <end position="6"/>
    </location>
</feature>
<feature type="strand" evidence="6">
    <location>
        <begin position="9"/>
        <end position="11"/>
    </location>
</feature>
<feature type="strand" evidence="6">
    <location>
        <begin position="21"/>
        <end position="25"/>
    </location>
</feature>
<feature type="helix" evidence="6">
    <location>
        <begin position="27"/>
        <end position="29"/>
    </location>
</feature>
<feature type="helix" evidence="6">
    <location>
        <begin position="31"/>
        <end position="33"/>
    </location>
</feature>
<feature type="helix" evidence="6">
    <location>
        <begin position="34"/>
        <end position="43"/>
    </location>
</feature>
<feature type="strand" evidence="6">
    <location>
        <begin position="47"/>
        <end position="53"/>
    </location>
</feature>
<feature type="strand" evidence="6">
    <location>
        <begin position="56"/>
        <end position="59"/>
    </location>
</feature>
<feature type="helix" evidence="6">
    <location>
        <begin position="64"/>
        <end position="76"/>
    </location>
</feature>
<feature type="strand" evidence="6">
    <location>
        <begin position="80"/>
        <end position="85"/>
    </location>
</feature>
<feature type="turn" evidence="6">
    <location>
        <begin position="87"/>
        <end position="90"/>
    </location>
</feature>
<feature type="helix" evidence="6">
    <location>
        <begin position="94"/>
        <end position="106"/>
    </location>
</feature>
<feature type="helix" evidence="6">
    <location>
        <begin position="108"/>
        <end position="111"/>
    </location>
</feature>
<feature type="turn" evidence="6">
    <location>
        <begin position="115"/>
        <end position="117"/>
    </location>
</feature>
<feature type="strand" evidence="6">
    <location>
        <begin position="118"/>
        <end position="121"/>
    </location>
</feature>
<feature type="helix" evidence="6">
    <location>
        <begin position="133"/>
        <end position="148"/>
    </location>
</feature>
<feature type="strand" evidence="6">
    <location>
        <begin position="155"/>
        <end position="158"/>
    </location>
</feature>
<feature type="turn" evidence="6">
    <location>
        <begin position="161"/>
        <end position="164"/>
    </location>
</feature>
<feature type="helix" evidence="6">
    <location>
        <begin position="167"/>
        <end position="179"/>
    </location>
</feature>
<feature type="strand" evidence="6">
    <location>
        <begin position="185"/>
        <end position="192"/>
    </location>
</feature>
<feature type="turn" evidence="6">
    <location>
        <begin position="193"/>
        <end position="195"/>
    </location>
</feature>
<feature type="strand" evidence="6">
    <location>
        <begin position="196"/>
        <end position="198"/>
    </location>
</feature>
<feature type="helix" evidence="6">
    <location>
        <begin position="199"/>
        <end position="210"/>
    </location>
</feature>
<feature type="turn" evidence="6">
    <location>
        <begin position="211"/>
        <end position="213"/>
    </location>
</feature>
<feature type="strand" evidence="6">
    <location>
        <begin position="216"/>
        <end position="221"/>
    </location>
</feature>
<feature type="helix" evidence="6">
    <location>
        <begin position="232"/>
        <end position="242"/>
    </location>
</feature>
<feature type="strand" evidence="6">
    <location>
        <begin position="245"/>
        <end position="249"/>
    </location>
</feature>
<feature type="helix" evidence="6">
    <location>
        <begin position="256"/>
        <end position="261"/>
    </location>
</feature>
<feature type="strand" evidence="6">
    <location>
        <begin position="263"/>
        <end position="266"/>
    </location>
</feature>
<feature type="strand" evidence="6">
    <location>
        <begin position="270"/>
        <end position="272"/>
    </location>
</feature>
<feature type="helix" evidence="6">
    <location>
        <begin position="274"/>
        <end position="281"/>
    </location>
</feature>
<feature type="helix" evidence="6">
    <location>
        <begin position="286"/>
        <end position="289"/>
    </location>
</feature>
<feature type="helix" evidence="6">
    <location>
        <begin position="294"/>
        <end position="296"/>
    </location>
</feature>
<feature type="helix" evidence="6">
    <location>
        <begin position="300"/>
        <end position="302"/>
    </location>
</feature>
<accession>G1K3N4</accession>
<comment type="function">
    <text evidence="3">Catalyzes the endo hydrolysis of beta-1,4-linked mannan, galactomannan and glucomannan. It is able to hydrolyze mannosidic linkages that are flanked by mannose or glucose.</text>
</comment>
<comment type="catalytic activity">
    <reaction evidence="3">
        <text>Random hydrolysis of (1-&gt;4)-beta-D-mannosidic linkages in mannans, galactomannans and glucomannans.</text>
        <dbReference type="EC" id="3.2.1.78"/>
    </reaction>
</comment>
<comment type="biophysicochemical properties">
    <kinetics>
        <KM evidence="3">1.8 mg/ml for galactomannan</KM>
        <KM evidence="3">2.6 mg/ml for glucomannan</KM>
        <text evidence="3">kcat is 38000 min(-1) for mannanase activity with galactomannan as substrate. kcat is 45000 min(-1) for mannanase activity with glucomannan as substrate.</text>
    </kinetics>
</comment>
<comment type="similarity">
    <text evidence="5">Belongs to the glycosyl hydrolase 5 (cellulase A) family.</text>
</comment>
<protein>
    <recommendedName>
        <fullName evidence="4">Mannan endo-1,4-beta-mannosidase</fullName>
        <ecNumber evidence="3">3.2.1.78</ecNumber>
    </recommendedName>
    <alternativeName>
        <fullName evidence="4">Mannanase 5A</fullName>
        <shortName evidence="4">Man5A</shortName>
    </alternativeName>
    <alternativeName>
        <fullName evidence="4">Mannanase A</fullName>
        <shortName evidence="4">ManA</shortName>
    </alternativeName>
</protein>
<name>MAN5_SALAG</name>
<reference key="1">
    <citation type="journal article" date="2009" name="Biochemistry">
        <title>Understanding how diverse beta-mannanases recognize heterogeneous substrates.</title>
        <authorList>
            <person name="Tailford L.E."/>
            <person name="Ducros V.M."/>
            <person name="Flint J.E."/>
            <person name="Roberts S.M."/>
            <person name="Morland C."/>
            <person name="Zechel D.L."/>
            <person name="Smith N."/>
            <person name="Bjornvad M.E."/>
            <person name="Borchert T.V."/>
            <person name="Wilson K.S."/>
            <person name="Davies G.J."/>
            <person name="Gilbert H.J."/>
        </authorList>
    </citation>
    <scope>X-RAY CRYSTALLOGRAPHY (1.78 ANGSTROMS)</scope>
    <scope>FUNCTION</scope>
    <scope>CATALYTIC ACTIVITY</scope>
    <scope>BIOPHYSICOCHEMICAL PROPERTIES</scope>
    <scope>SUBSTRATE SPECIFICITY</scope>
</reference>
<sequence>AGFYVDGNTLYDANGQPFVMRGINHGHAWYKDTASTAIPAIAEQGANTIRIVLSDGGQWEKDDIDTIREVIELAEQNKMVAVVEVHDATGRDSRSDLNRAVDYWIEMKDALIGKEDTVIINIANEWYGSWDGSAWADGYIDVIPKLRDAGLTHTLMVDAAGWGQYPQSIHDYGQDVFNADPLKNTMFSIHMYEYAGGDANTVRSNIDRVIDQDLALVIGEFGHRHTDGDVDEDTILSYSEETGTGWLAWSWKGNSTEWDYLDLSEDWAGQHLTDWGNRIVHGADGLQETSKPSTVFTDDNGGHPEPPT</sequence>
<proteinExistence type="evidence at protein level"/>
<dbReference type="EC" id="3.2.1.78" evidence="3"/>
<dbReference type="PDB" id="2WHJ">
    <property type="method" value="X-ray"/>
    <property type="resolution" value="1.78 A"/>
    <property type="chains" value="A=1-308"/>
</dbReference>
<dbReference type="PDBsum" id="2WHJ"/>
<dbReference type="SMR" id="G1K3N4"/>
<dbReference type="EvolutionaryTrace" id="G1K3N4"/>
<dbReference type="GO" id="GO:0016985">
    <property type="term" value="F:mannan endo-1,4-beta-mannosidase activity"/>
    <property type="evidence" value="ECO:0007669"/>
    <property type="project" value="UniProtKB-EC"/>
</dbReference>
<dbReference type="GO" id="GO:0009251">
    <property type="term" value="P:glucan catabolic process"/>
    <property type="evidence" value="ECO:0007669"/>
    <property type="project" value="TreeGrafter"/>
</dbReference>
<dbReference type="Gene3D" id="3.20.20.80">
    <property type="entry name" value="Glycosidases"/>
    <property type="match status" value="1"/>
</dbReference>
<dbReference type="InterPro" id="IPR001547">
    <property type="entry name" value="Glyco_hydro_5"/>
</dbReference>
<dbReference type="InterPro" id="IPR017853">
    <property type="entry name" value="Glycoside_hydrolase_SF"/>
</dbReference>
<dbReference type="PANTHER" id="PTHR34142">
    <property type="entry name" value="ENDO-BETA-1,4-GLUCANASE A"/>
    <property type="match status" value="1"/>
</dbReference>
<dbReference type="PANTHER" id="PTHR34142:SF1">
    <property type="entry name" value="GLYCOSIDE HYDROLASE FAMILY 5 DOMAIN-CONTAINING PROTEIN"/>
    <property type="match status" value="1"/>
</dbReference>
<dbReference type="Pfam" id="PF00150">
    <property type="entry name" value="Cellulase"/>
    <property type="match status" value="1"/>
</dbReference>
<dbReference type="SUPFAM" id="SSF51445">
    <property type="entry name" value="(Trans)glycosidases"/>
    <property type="match status" value="1"/>
</dbReference>
<keyword id="KW-0002">3D-structure</keyword>
<keyword id="KW-0326">Glycosidase</keyword>
<keyword id="KW-0378">Hydrolase</keyword>